<gene>
    <name evidence="13" type="primary">Rffl</name>
</gene>
<organism>
    <name type="scientific">Mus musculus</name>
    <name type="common">Mouse</name>
    <dbReference type="NCBI Taxonomy" id="10090"/>
    <lineage>
        <taxon>Eukaryota</taxon>
        <taxon>Metazoa</taxon>
        <taxon>Chordata</taxon>
        <taxon>Craniata</taxon>
        <taxon>Vertebrata</taxon>
        <taxon>Euteleostomi</taxon>
        <taxon>Mammalia</taxon>
        <taxon>Eutheria</taxon>
        <taxon>Euarchontoglires</taxon>
        <taxon>Glires</taxon>
        <taxon>Rodentia</taxon>
        <taxon>Myomorpha</taxon>
        <taxon>Muroidea</taxon>
        <taxon>Muridae</taxon>
        <taxon>Murinae</taxon>
        <taxon>Mus</taxon>
        <taxon>Mus</taxon>
    </lineage>
</organism>
<comment type="function">
    <text evidence="5 7">E3 ubiquitin-protein ligase that regulates several biological processes through the ubiquitin-mediated proteasomal degradation of various target proteins. Mediates 'Lys-48'-linked polyubiquitination of PRR5L and its subsequent proteasomal degradation thereby indirectly regulating cell migration through the mTORC2 complex. Also ubiquitinates the caspases CASP8 and CASP10, promoting their proteasomal degradation, to negatively regulate apoptosis downstream of death domain receptors. Also negatively regulates the tumor necrosis factor-mediated signaling pathway through targeting of RIPK1 to ubiquitin-mediated proteasomal degradation. Negatively regulates p53/TP53 through its direct ubiquitination and targeting to proteasomal degradation. Indirectly, may also negatively regulate p53/TP53 through ubiquitination and degradation of SFN. May also play a role in endocytic recycling.</text>
</comment>
<comment type="catalytic activity">
    <reaction evidence="2">
        <text>S-ubiquitinyl-[E2 ubiquitin-conjugating enzyme]-L-cysteine + [acceptor protein]-L-lysine = [E2 ubiquitin-conjugating enzyme]-L-cysteine + N(6)-ubiquitinyl-[acceptor protein]-L-lysine.</text>
        <dbReference type="EC" id="2.3.2.27"/>
    </reaction>
</comment>
<comment type="pathway">
    <text evidence="2">Protein modification; protein ubiquitination.</text>
</comment>
<comment type="subunit">
    <text evidence="2">Interacts with CASP8 and CASP10. Interacts with RIPK1 (via protein kinase domain); involved in RIPK1 ubiquitination. Interacts with PRR5L. Interacts (via RING-type zinc finger) with p53/TP53; involved in p53/TP53 ubiquitination. Interacts (via RING-type zinc finger) with MDM2; the interaction stabilizes MDM2.</text>
</comment>
<comment type="subcellular location">
    <subcellularLocation>
        <location evidence="5">Cytoplasm</location>
        <location evidence="5">Cytosol</location>
    </subcellularLocation>
    <subcellularLocation>
        <location evidence="5">Cell membrane</location>
        <topology evidence="5">Peripheral membrane protein</topology>
    </subcellularLocation>
    <subcellularLocation>
        <location evidence="11">Recycling endosome membrane</location>
        <topology evidence="11">Peripheral membrane protein</topology>
    </subcellularLocation>
    <text>The FYVE-type zinc finger may mediate phosphatidylinositol phosphate-binding and control subcellular localization.</text>
</comment>
<comment type="alternative products">
    <event type="alternative splicing"/>
    <isoform>
        <id>Q6ZQM0-1</id>
        <name>1</name>
        <sequence type="displayed"/>
    </isoform>
    <isoform>
        <id>Q6ZQM0-2</id>
        <name>2</name>
        <sequence type="described" ref="VSP_015753"/>
    </isoform>
    <isoform>
        <id>Q6ZQM0-3</id>
        <name>3</name>
        <sequence type="described" ref="VSP_015753 VSP_015754"/>
    </isoform>
    <isoform>
        <id>Q6ZQM0-4</id>
        <name>4</name>
        <sequence type="described" ref="VSP_015753 VSP_015754 VSP_015755 VSP_015756"/>
    </isoform>
</comment>
<comment type="tissue specificity">
    <text evidence="5">Ubiquitous. Detected in heart, brain, spleen, lung, liver, skeletal muscle, kidney, testis, thymus, whole embryo and embryonic stem cells.</text>
</comment>
<comment type="induction">
    <text evidence="7">Up-regulation by LPA/lysophosphatidic acid is dependent on GNA12.</text>
</comment>
<comment type="domain">
    <text evidence="5">The FYVE-type zinc finger domain is required for localization to the recycling endosome membranes and the function in endocytic recycling.</text>
</comment>
<comment type="domain">
    <text evidence="2">The RING-type zinc finger is required for the ubiquitination of target proteins.</text>
</comment>
<comment type="PTM">
    <text evidence="1">Autoubiquitinated.</text>
</comment>
<comment type="PTM">
    <text evidence="1">Palmitoylated.</text>
</comment>
<comment type="PTM">
    <text evidence="1">Undergoes caspase-mediated cleavage upon death-receptor activation, by TNFSF10 for instance. May be mediated by the caspases CASP8 and CASP10 in a negative feedback loop (By similarity).</text>
</comment>
<comment type="disruption phenotype">
    <text evidence="6">No visible phenotype.</text>
</comment>
<proteinExistence type="evidence at protein level"/>
<evidence type="ECO:0000250" key="1"/>
<evidence type="ECO:0000250" key="2">
    <source>
        <dbReference type="UniProtKB" id="Q8WZ73"/>
    </source>
</evidence>
<evidence type="ECO:0000255" key="3">
    <source>
        <dbReference type="PROSITE-ProRule" id="PRU00175"/>
    </source>
</evidence>
<evidence type="ECO:0000256" key="4">
    <source>
        <dbReference type="SAM" id="MobiDB-lite"/>
    </source>
</evidence>
<evidence type="ECO:0000269" key="5">
    <source>
    </source>
</evidence>
<evidence type="ECO:0000269" key="6">
    <source>
    </source>
</evidence>
<evidence type="ECO:0000269" key="7">
    <source>
    </source>
</evidence>
<evidence type="ECO:0000303" key="8">
    <source>
    </source>
</evidence>
<evidence type="ECO:0000303" key="9">
    <source ref="1"/>
</evidence>
<evidence type="ECO:0000305" key="10"/>
<evidence type="ECO:0000305" key="11">
    <source>
    </source>
</evidence>
<evidence type="ECO:0000312" key="12">
    <source>
        <dbReference type="EMBL" id="AAL30769.1"/>
    </source>
</evidence>
<evidence type="ECO:0000312" key="13">
    <source>
        <dbReference type="MGI" id="MGI:1914588"/>
    </source>
</evidence>
<evidence type="ECO:0007744" key="14">
    <source>
    </source>
</evidence>
<feature type="chain" id="PRO_0000056026" description="E3 ubiquitin-protein ligase rififylin">
    <location>
        <begin position="1"/>
        <end position="377"/>
    </location>
</feature>
<feature type="domain" description="SAP 1">
    <location>
        <begin position="115"/>
        <end position="134"/>
    </location>
</feature>
<feature type="domain" description="SAP 2">
    <location>
        <begin position="264"/>
        <end position="278"/>
    </location>
</feature>
<feature type="zinc finger region" description="FYVE-type">
    <location>
        <begin position="55"/>
        <end position="107"/>
    </location>
</feature>
<feature type="zinc finger region" description="RING-type" evidence="3">
    <location>
        <begin position="330"/>
        <end position="365"/>
    </location>
</feature>
<feature type="region of interest" description="Disordered" evidence="4">
    <location>
        <begin position="176"/>
        <end position="249"/>
    </location>
</feature>
<feature type="compositionally biased region" description="Polar residues" evidence="4">
    <location>
        <begin position="190"/>
        <end position="212"/>
    </location>
</feature>
<feature type="compositionally biased region" description="Acidic residues" evidence="4">
    <location>
        <begin position="235"/>
        <end position="245"/>
    </location>
</feature>
<feature type="modified residue" description="Phosphoserine" evidence="14">
    <location>
        <position position="240"/>
    </location>
</feature>
<feature type="modified residue" description="Phosphoserine" evidence="14">
    <location>
        <position position="243"/>
    </location>
</feature>
<feature type="modified residue" description="Phosphoserine" evidence="14">
    <location>
        <position position="246"/>
    </location>
</feature>
<feature type="modified residue" description="Phosphoserine" evidence="14">
    <location>
        <position position="254"/>
    </location>
</feature>
<feature type="splice variant" id="VSP_015753" description="In isoform 2, isoform 3 and isoform 4." evidence="8 9">
    <location>
        <begin position="1"/>
        <end position="14"/>
    </location>
</feature>
<feature type="splice variant" id="VSP_015754" description="In isoform 3 and isoform 4." evidence="8 9">
    <location>
        <begin position="211"/>
        <end position="238"/>
    </location>
</feature>
<feature type="splice variant" id="VSP_015755" description="In isoform 4." evidence="8">
    <original>GGAVPSGLEENLCKICMD</original>
    <variation>ASHLLWEVFFDLMFHSYV</variation>
    <location>
        <begin position="318"/>
        <end position="335"/>
    </location>
</feature>
<feature type="splice variant" id="VSP_015756" description="In isoform 4." evidence="8">
    <location>
        <begin position="336"/>
        <end position="377"/>
    </location>
</feature>
<feature type="sequence conflict" description="In Ref. 2; BAB29984." evidence="10" ref="2">
    <original>P</original>
    <variation>L</variation>
    <location>
        <position position="52"/>
    </location>
</feature>
<name>RFFL_MOUSE</name>
<dbReference type="EC" id="2.3.2.27" evidence="2"/>
<dbReference type="EMBL" id="AF434814">
    <property type="protein sequence ID" value="AAL30769.1"/>
    <property type="molecule type" value="mRNA"/>
</dbReference>
<dbReference type="EMBL" id="AK007189">
    <property type="protein sequence ID" value="BAB24891.1"/>
    <property type="molecule type" value="mRNA"/>
</dbReference>
<dbReference type="EMBL" id="AK015806">
    <property type="protein sequence ID" value="BAB29984.1"/>
    <property type="molecule type" value="mRNA"/>
</dbReference>
<dbReference type="EMBL" id="AK028095">
    <property type="protein sequence ID" value="BAC25744.1"/>
    <property type="molecule type" value="mRNA"/>
</dbReference>
<dbReference type="EMBL" id="AK128983">
    <property type="protein sequence ID" value="BAC87665.1"/>
    <property type="molecule type" value="mRNA"/>
</dbReference>
<dbReference type="EMBL" id="AL645594">
    <property type="status" value="NOT_ANNOTATED_CDS"/>
    <property type="molecule type" value="Genomic_DNA"/>
</dbReference>
<dbReference type="CCDS" id="CCDS25148.1">
    <molecule id="Q6ZQM0-2"/>
</dbReference>
<dbReference type="CCDS" id="CCDS25149.1">
    <molecule id="Q6ZQM0-3"/>
</dbReference>
<dbReference type="CCDS" id="CCDS48867.1">
    <molecule id="Q6ZQM0-1"/>
</dbReference>
<dbReference type="RefSeq" id="NP_001007466.1">
    <molecule id="Q6ZQM0-2"/>
    <property type="nucleotide sequence ID" value="NM_001007465.3"/>
</dbReference>
<dbReference type="RefSeq" id="NP_001158042.1">
    <molecule id="Q6ZQM0-1"/>
    <property type="nucleotide sequence ID" value="NM_001164570.1"/>
</dbReference>
<dbReference type="RefSeq" id="NP_080373.1">
    <molecule id="Q6ZQM0-3"/>
    <property type="nucleotide sequence ID" value="NM_026097.3"/>
</dbReference>
<dbReference type="RefSeq" id="XP_006534051.1">
    <molecule id="Q6ZQM0-2"/>
    <property type="nucleotide sequence ID" value="XM_006533988.3"/>
</dbReference>
<dbReference type="RefSeq" id="XP_006534052.1">
    <molecule id="Q6ZQM0-2"/>
    <property type="nucleotide sequence ID" value="XM_006533989.4"/>
</dbReference>
<dbReference type="RefSeq" id="XP_030102107.1">
    <molecule id="Q6ZQM0-3"/>
    <property type="nucleotide sequence ID" value="XM_030246247.2"/>
</dbReference>
<dbReference type="RefSeq" id="XP_036012800.1">
    <molecule id="Q6ZQM0-1"/>
    <property type="nucleotide sequence ID" value="XM_036156907.1"/>
</dbReference>
<dbReference type="RefSeq" id="XP_036012801.1">
    <molecule id="Q6ZQM0-3"/>
    <property type="nucleotide sequence ID" value="XM_036156908.1"/>
</dbReference>
<dbReference type="SMR" id="Q6ZQM0"/>
<dbReference type="FunCoup" id="Q6ZQM0">
    <property type="interactions" value="2161"/>
</dbReference>
<dbReference type="STRING" id="10090.ENSMUSP00000071150"/>
<dbReference type="GlyGen" id="Q6ZQM0">
    <property type="glycosylation" value="1 site"/>
</dbReference>
<dbReference type="iPTMnet" id="Q6ZQM0"/>
<dbReference type="PhosphoSitePlus" id="Q6ZQM0"/>
<dbReference type="SwissPalm" id="Q6ZQM0"/>
<dbReference type="jPOST" id="Q6ZQM0"/>
<dbReference type="PaxDb" id="10090-ENSMUSP00000021036"/>
<dbReference type="ProteomicsDB" id="253228">
    <molecule id="Q6ZQM0-1"/>
</dbReference>
<dbReference type="ProteomicsDB" id="253229">
    <molecule id="Q6ZQM0-2"/>
</dbReference>
<dbReference type="ProteomicsDB" id="253230">
    <molecule id="Q6ZQM0-3"/>
</dbReference>
<dbReference type="ProteomicsDB" id="253231">
    <molecule id="Q6ZQM0-4"/>
</dbReference>
<dbReference type="TopDownProteomics" id="Q6ZQM0-2">
    <molecule id="Q6ZQM0-2"/>
</dbReference>
<dbReference type="Antibodypedia" id="3764">
    <property type="antibodies" value="254 antibodies from 29 providers"/>
</dbReference>
<dbReference type="DNASU" id="67338"/>
<dbReference type="Ensembl" id="ENSMUST00000021036.13">
    <molecule id="Q6ZQM0-3"/>
    <property type="protein sequence ID" value="ENSMUSP00000021036.7"/>
    <property type="gene ID" value="ENSMUSG00000020696.19"/>
</dbReference>
<dbReference type="Ensembl" id="ENSMUST00000074515.11">
    <molecule id="Q6ZQM0-2"/>
    <property type="protein sequence ID" value="ENSMUSP00000074108.5"/>
    <property type="gene ID" value="ENSMUSG00000020696.19"/>
</dbReference>
<dbReference type="Ensembl" id="ENSMUST00000093975.12">
    <molecule id="Q6ZQM0-1"/>
    <property type="protein sequence ID" value="ENSMUSP00000091510.6"/>
    <property type="gene ID" value="ENSMUSG00000020696.19"/>
</dbReference>
<dbReference type="Ensembl" id="ENSMUST00000103218.3">
    <molecule id="Q6ZQM0-4"/>
    <property type="protein sequence ID" value="ENSMUSP00000099507.3"/>
    <property type="gene ID" value="ENSMUSG00000020696.19"/>
</dbReference>
<dbReference type="Ensembl" id="ENSMUST00000108173.10">
    <molecule id="Q6ZQM0-2"/>
    <property type="protein sequence ID" value="ENSMUSP00000103808.4"/>
    <property type="gene ID" value="ENSMUSG00000020696.19"/>
</dbReference>
<dbReference type="GeneID" id="67338"/>
<dbReference type="KEGG" id="mmu:67338"/>
<dbReference type="UCSC" id="uc007kni.2">
    <molecule id="Q6ZQM0-1"/>
    <property type="organism name" value="mouse"/>
</dbReference>
<dbReference type="AGR" id="MGI:1914588"/>
<dbReference type="CTD" id="117584"/>
<dbReference type="MGI" id="MGI:1914588">
    <property type="gene designation" value="Rffl"/>
</dbReference>
<dbReference type="VEuPathDB" id="HostDB:ENSMUSG00000020696"/>
<dbReference type="eggNOG" id="KOG4275">
    <property type="taxonomic scope" value="Eukaryota"/>
</dbReference>
<dbReference type="GeneTree" id="ENSGT00390000012719"/>
<dbReference type="HOGENOM" id="CLU_041431_1_0_1"/>
<dbReference type="InParanoid" id="Q6ZQM0"/>
<dbReference type="OMA" id="GSEQSCK"/>
<dbReference type="OrthoDB" id="6339724at2759"/>
<dbReference type="TreeFam" id="TF325195"/>
<dbReference type="Reactome" id="R-MMU-6804757">
    <property type="pathway name" value="Regulation of TP53 Degradation"/>
</dbReference>
<dbReference type="UniPathway" id="UPA00143"/>
<dbReference type="BioGRID-ORCS" id="67338">
    <property type="hits" value="7 hits in 78 CRISPR screens"/>
</dbReference>
<dbReference type="ChiTaRS" id="Rffl">
    <property type="organism name" value="mouse"/>
</dbReference>
<dbReference type="PRO" id="PR:Q6ZQM0"/>
<dbReference type="Proteomes" id="UP000000589">
    <property type="component" value="Chromosome 11"/>
</dbReference>
<dbReference type="RNAct" id="Q6ZQM0">
    <property type="molecule type" value="protein"/>
</dbReference>
<dbReference type="Bgee" id="ENSMUSG00000020696">
    <property type="expression patterns" value="Expressed in floor plate of midbrain and 249 other cell types or tissues"/>
</dbReference>
<dbReference type="ExpressionAtlas" id="Q6ZQM0">
    <property type="expression patterns" value="baseline and differential"/>
</dbReference>
<dbReference type="GO" id="GO:0005737">
    <property type="term" value="C:cytoplasm"/>
    <property type="evidence" value="ECO:0000250"/>
    <property type="project" value="UniProtKB"/>
</dbReference>
<dbReference type="GO" id="GO:0031410">
    <property type="term" value="C:cytoplasmic vesicle"/>
    <property type="evidence" value="ECO:0000314"/>
    <property type="project" value="MGI"/>
</dbReference>
<dbReference type="GO" id="GO:0005829">
    <property type="term" value="C:cytosol"/>
    <property type="evidence" value="ECO:0007669"/>
    <property type="project" value="UniProtKB-SubCell"/>
</dbReference>
<dbReference type="GO" id="GO:0010008">
    <property type="term" value="C:endosome membrane"/>
    <property type="evidence" value="ECO:0000250"/>
    <property type="project" value="UniProtKB"/>
</dbReference>
<dbReference type="GO" id="GO:0005886">
    <property type="term" value="C:plasma membrane"/>
    <property type="evidence" value="ECO:0000250"/>
    <property type="project" value="UniProtKB"/>
</dbReference>
<dbReference type="GO" id="GO:0055038">
    <property type="term" value="C:recycling endosome membrane"/>
    <property type="evidence" value="ECO:0007669"/>
    <property type="project" value="UniProtKB-SubCell"/>
</dbReference>
<dbReference type="GO" id="GO:0002039">
    <property type="term" value="F:p53 binding"/>
    <property type="evidence" value="ECO:0007669"/>
    <property type="project" value="Ensembl"/>
</dbReference>
<dbReference type="GO" id="GO:0002020">
    <property type="term" value="F:protease binding"/>
    <property type="evidence" value="ECO:0007669"/>
    <property type="project" value="Ensembl"/>
</dbReference>
<dbReference type="GO" id="GO:0019901">
    <property type="term" value="F:protein kinase binding"/>
    <property type="evidence" value="ECO:0007669"/>
    <property type="project" value="Ensembl"/>
</dbReference>
<dbReference type="GO" id="GO:0061630">
    <property type="term" value="F:ubiquitin protein ligase activity"/>
    <property type="evidence" value="ECO:0000250"/>
    <property type="project" value="UniProtKB"/>
</dbReference>
<dbReference type="GO" id="GO:0031625">
    <property type="term" value="F:ubiquitin protein ligase binding"/>
    <property type="evidence" value="ECO:0007669"/>
    <property type="project" value="Ensembl"/>
</dbReference>
<dbReference type="GO" id="GO:0008270">
    <property type="term" value="F:zinc ion binding"/>
    <property type="evidence" value="ECO:0007669"/>
    <property type="project" value="UniProtKB-KW"/>
</dbReference>
<dbReference type="GO" id="GO:0006915">
    <property type="term" value="P:apoptotic process"/>
    <property type="evidence" value="ECO:0007669"/>
    <property type="project" value="UniProtKB-KW"/>
</dbReference>
<dbReference type="GO" id="GO:0006886">
    <property type="term" value="P:intracellular protein transport"/>
    <property type="evidence" value="ECO:0000314"/>
    <property type="project" value="MGI"/>
</dbReference>
<dbReference type="GO" id="GO:1902042">
    <property type="term" value="P:negative regulation of extrinsic apoptotic signaling pathway via death domain receptors"/>
    <property type="evidence" value="ECO:0000250"/>
    <property type="project" value="UniProtKB"/>
</dbReference>
<dbReference type="GO" id="GO:1901797">
    <property type="term" value="P:negative regulation of signal transduction by p53 class mediator"/>
    <property type="evidence" value="ECO:0000250"/>
    <property type="project" value="UniProtKB"/>
</dbReference>
<dbReference type="GO" id="GO:0010804">
    <property type="term" value="P:negative regulation of tumor necrosis factor-mediated signaling pathway"/>
    <property type="evidence" value="ECO:0000250"/>
    <property type="project" value="UniProtKB"/>
</dbReference>
<dbReference type="GO" id="GO:0043161">
    <property type="term" value="P:proteasome-mediated ubiquitin-dependent protein catabolic process"/>
    <property type="evidence" value="ECO:0000250"/>
    <property type="project" value="UniProtKB"/>
</dbReference>
<dbReference type="GO" id="GO:0070936">
    <property type="term" value="P:protein K48-linked ubiquitination"/>
    <property type="evidence" value="ECO:0000250"/>
    <property type="project" value="UniProtKB"/>
</dbReference>
<dbReference type="GO" id="GO:0010762">
    <property type="term" value="P:regulation of fibroblast migration"/>
    <property type="evidence" value="ECO:0000315"/>
    <property type="project" value="UniProtKB"/>
</dbReference>
<dbReference type="GO" id="GO:0006511">
    <property type="term" value="P:ubiquitin-dependent protein catabolic process"/>
    <property type="evidence" value="ECO:0000250"/>
    <property type="project" value="UniProtKB"/>
</dbReference>
<dbReference type="CDD" id="cd15770">
    <property type="entry name" value="FYVE_CARP2"/>
    <property type="match status" value="1"/>
</dbReference>
<dbReference type="CDD" id="cd16707">
    <property type="entry name" value="RING-HC_CARP2"/>
    <property type="match status" value="1"/>
</dbReference>
<dbReference type="FunFam" id="1.10.720.140:FF:000001">
    <property type="entry name" value="E3 ubiquitin-protein ligase RNF34 isoform X1"/>
    <property type="match status" value="1"/>
</dbReference>
<dbReference type="FunFam" id="3.30.40.10:FF:000110">
    <property type="entry name" value="E3 ubiquitin-protein ligase RNF34 isoform X1"/>
    <property type="match status" value="1"/>
</dbReference>
<dbReference type="Gene3D" id="1.10.720.140">
    <property type="match status" value="1"/>
</dbReference>
<dbReference type="Gene3D" id="3.30.40.10">
    <property type="entry name" value="Zinc/RING finger domain, C3HC4 (zinc finger)"/>
    <property type="match status" value="1"/>
</dbReference>
<dbReference type="InterPro" id="IPR049320">
    <property type="entry name" value="CARP1_2_FYVE"/>
</dbReference>
<dbReference type="InterPro" id="IPR049322">
    <property type="entry name" value="CARP2_FYVE"/>
</dbReference>
<dbReference type="InterPro" id="IPR051728">
    <property type="entry name" value="RING-FYVE_E3_ubiquitin-ligase"/>
</dbReference>
<dbReference type="InterPro" id="IPR055111">
    <property type="entry name" value="RNF34L-like_HeH"/>
</dbReference>
<dbReference type="InterPro" id="IPR036361">
    <property type="entry name" value="SAP_dom_sf"/>
</dbReference>
<dbReference type="InterPro" id="IPR011011">
    <property type="entry name" value="Znf_FYVE_PHD"/>
</dbReference>
<dbReference type="InterPro" id="IPR001841">
    <property type="entry name" value="Znf_RING"/>
</dbReference>
<dbReference type="InterPro" id="IPR013083">
    <property type="entry name" value="Znf_RING/FYVE/PHD"/>
</dbReference>
<dbReference type="PANTHER" id="PTHR14879">
    <property type="entry name" value="CASPASE REGULATOR, RING FINGER DOMAIN-CONTAINING"/>
    <property type="match status" value="1"/>
</dbReference>
<dbReference type="PANTHER" id="PTHR14879:SF2">
    <property type="entry name" value="E3 UBIQUITIN-PROTEIN LIGASE RIFIFYLIN"/>
    <property type="match status" value="1"/>
</dbReference>
<dbReference type="Pfam" id="PF21272">
    <property type="entry name" value="FYVE_CARP1-2"/>
    <property type="match status" value="1"/>
</dbReference>
<dbReference type="Pfam" id="PF22968">
    <property type="entry name" value="RNF34L-like_3rd"/>
    <property type="match status" value="1"/>
</dbReference>
<dbReference type="Pfam" id="PF23632">
    <property type="entry name" value="SAP_RNF34_RFFL"/>
    <property type="match status" value="1"/>
</dbReference>
<dbReference type="Pfam" id="PF13920">
    <property type="entry name" value="zf-C3HC4_3"/>
    <property type="match status" value="1"/>
</dbReference>
<dbReference type="SMART" id="SM00184">
    <property type="entry name" value="RING"/>
    <property type="match status" value="1"/>
</dbReference>
<dbReference type="SUPFAM" id="SSF57903">
    <property type="entry name" value="FYVE/PHD zinc finger"/>
    <property type="match status" value="1"/>
</dbReference>
<dbReference type="SUPFAM" id="SSF57850">
    <property type="entry name" value="RING/U-box"/>
    <property type="match status" value="1"/>
</dbReference>
<dbReference type="SUPFAM" id="SSF68906">
    <property type="entry name" value="SAP domain"/>
    <property type="match status" value="1"/>
</dbReference>
<dbReference type="PROSITE" id="PS50089">
    <property type="entry name" value="ZF_RING_2"/>
    <property type="match status" value="1"/>
</dbReference>
<accession>Q6ZQM0</accession>
<accession>Q5SVC2</accession>
<accession>Q5SVC4</accession>
<accession>Q9D543</accession>
<accession>Q9D9B1</accession>
<sequence>MSQPSLWKDSHYFIMWASCCNWFCLDGQPEEAPPPQGARTQAYSNPGYSSFPSPTGSEPSCKACGVHFASTTRKQTCLDCKKNFCMTCSSQEGNGPRLCLLCLRFRATAFQREELMKMKVKDLRDYLSLHDISTEMCREKEELVFLVLGQQPVISEADRTRVPHLPQAFPEQQAFLTQPQTSTVPPTSPGLPSSPAQVTSVPLAQDQETQQAVGHVSQDHEEPIFPESTARVPTEDETQSVDSEDSFVPGRRASLSDLTHLEDIEGLTVRQLKEILARNFVNYKGCCEKWELMERVTRLYKDQKGLQHLVSGNEDQNGGAVPSGLEENLCKICMDSPIDCVLLECGHMVTCTKCGKRMNECPICRQYVIRAVHVFRS</sequence>
<reference key="1">
    <citation type="submission" date="2001-10" db="EMBL/GenBank/DDBJ databases">
        <title>Fring, a protein with a modified FYVE domain and a RING domain.</title>
        <authorList>
            <person name="Hong W."/>
        </authorList>
    </citation>
    <scope>NUCLEOTIDE SEQUENCE [MRNA] (ISOFORM 3)</scope>
    <source>
        <strain>C57BL/6J</strain>
    </source>
</reference>
<reference key="2">
    <citation type="journal article" date="2005" name="Science">
        <title>The transcriptional landscape of the mammalian genome.</title>
        <authorList>
            <person name="Carninci P."/>
            <person name="Kasukawa T."/>
            <person name="Katayama S."/>
            <person name="Gough J."/>
            <person name="Frith M.C."/>
            <person name="Maeda N."/>
            <person name="Oyama R."/>
            <person name="Ravasi T."/>
            <person name="Lenhard B."/>
            <person name="Wells C."/>
            <person name="Kodzius R."/>
            <person name="Shimokawa K."/>
            <person name="Bajic V.B."/>
            <person name="Brenner S.E."/>
            <person name="Batalov S."/>
            <person name="Forrest A.R."/>
            <person name="Zavolan M."/>
            <person name="Davis M.J."/>
            <person name="Wilming L.G."/>
            <person name="Aidinis V."/>
            <person name="Allen J.E."/>
            <person name="Ambesi-Impiombato A."/>
            <person name="Apweiler R."/>
            <person name="Aturaliya R.N."/>
            <person name="Bailey T.L."/>
            <person name="Bansal M."/>
            <person name="Baxter L."/>
            <person name="Beisel K.W."/>
            <person name="Bersano T."/>
            <person name="Bono H."/>
            <person name="Chalk A.M."/>
            <person name="Chiu K.P."/>
            <person name="Choudhary V."/>
            <person name="Christoffels A."/>
            <person name="Clutterbuck D.R."/>
            <person name="Crowe M.L."/>
            <person name="Dalla E."/>
            <person name="Dalrymple B.P."/>
            <person name="de Bono B."/>
            <person name="Della Gatta G."/>
            <person name="di Bernardo D."/>
            <person name="Down T."/>
            <person name="Engstrom P."/>
            <person name="Fagiolini M."/>
            <person name="Faulkner G."/>
            <person name="Fletcher C.F."/>
            <person name="Fukushima T."/>
            <person name="Furuno M."/>
            <person name="Futaki S."/>
            <person name="Gariboldi M."/>
            <person name="Georgii-Hemming P."/>
            <person name="Gingeras T.R."/>
            <person name="Gojobori T."/>
            <person name="Green R.E."/>
            <person name="Gustincich S."/>
            <person name="Harbers M."/>
            <person name="Hayashi Y."/>
            <person name="Hensch T.K."/>
            <person name="Hirokawa N."/>
            <person name="Hill D."/>
            <person name="Huminiecki L."/>
            <person name="Iacono M."/>
            <person name="Ikeo K."/>
            <person name="Iwama A."/>
            <person name="Ishikawa T."/>
            <person name="Jakt M."/>
            <person name="Kanapin A."/>
            <person name="Katoh M."/>
            <person name="Kawasawa Y."/>
            <person name="Kelso J."/>
            <person name="Kitamura H."/>
            <person name="Kitano H."/>
            <person name="Kollias G."/>
            <person name="Krishnan S.P."/>
            <person name="Kruger A."/>
            <person name="Kummerfeld S.K."/>
            <person name="Kurochkin I.V."/>
            <person name="Lareau L.F."/>
            <person name="Lazarevic D."/>
            <person name="Lipovich L."/>
            <person name="Liu J."/>
            <person name="Liuni S."/>
            <person name="McWilliam S."/>
            <person name="Madan Babu M."/>
            <person name="Madera M."/>
            <person name="Marchionni L."/>
            <person name="Matsuda H."/>
            <person name="Matsuzawa S."/>
            <person name="Miki H."/>
            <person name="Mignone F."/>
            <person name="Miyake S."/>
            <person name="Morris K."/>
            <person name="Mottagui-Tabar S."/>
            <person name="Mulder N."/>
            <person name="Nakano N."/>
            <person name="Nakauchi H."/>
            <person name="Ng P."/>
            <person name="Nilsson R."/>
            <person name="Nishiguchi S."/>
            <person name="Nishikawa S."/>
            <person name="Nori F."/>
            <person name="Ohara O."/>
            <person name="Okazaki Y."/>
            <person name="Orlando V."/>
            <person name="Pang K.C."/>
            <person name="Pavan W.J."/>
            <person name="Pavesi G."/>
            <person name="Pesole G."/>
            <person name="Petrovsky N."/>
            <person name="Piazza S."/>
            <person name="Reed J."/>
            <person name="Reid J.F."/>
            <person name="Ring B.Z."/>
            <person name="Ringwald M."/>
            <person name="Rost B."/>
            <person name="Ruan Y."/>
            <person name="Salzberg S.L."/>
            <person name="Sandelin A."/>
            <person name="Schneider C."/>
            <person name="Schoenbach C."/>
            <person name="Sekiguchi K."/>
            <person name="Semple C.A."/>
            <person name="Seno S."/>
            <person name="Sessa L."/>
            <person name="Sheng Y."/>
            <person name="Shibata Y."/>
            <person name="Shimada H."/>
            <person name="Shimada K."/>
            <person name="Silva D."/>
            <person name="Sinclair B."/>
            <person name="Sperling S."/>
            <person name="Stupka E."/>
            <person name="Sugiura K."/>
            <person name="Sultana R."/>
            <person name="Takenaka Y."/>
            <person name="Taki K."/>
            <person name="Tammoja K."/>
            <person name="Tan S.L."/>
            <person name="Tang S."/>
            <person name="Taylor M.S."/>
            <person name="Tegner J."/>
            <person name="Teichmann S.A."/>
            <person name="Ueda H.R."/>
            <person name="van Nimwegen E."/>
            <person name="Verardo R."/>
            <person name="Wei C.L."/>
            <person name="Yagi K."/>
            <person name="Yamanishi H."/>
            <person name="Zabarovsky E."/>
            <person name="Zhu S."/>
            <person name="Zimmer A."/>
            <person name="Hide W."/>
            <person name="Bult C."/>
            <person name="Grimmond S.M."/>
            <person name="Teasdale R.D."/>
            <person name="Liu E.T."/>
            <person name="Brusic V."/>
            <person name="Quackenbush J."/>
            <person name="Wahlestedt C."/>
            <person name="Mattick J.S."/>
            <person name="Hume D.A."/>
            <person name="Kai C."/>
            <person name="Sasaki D."/>
            <person name="Tomaru Y."/>
            <person name="Fukuda S."/>
            <person name="Kanamori-Katayama M."/>
            <person name="Suzuki M."/>
            <person name="Aoki J."/>
            <person name="Arakawa T."/>
            <person name="Iida J."/>
            <person name="Imamura K."/>
            <person name="Itoh M."/>
            <person name="Kato T."/>
            <person name="Kawaji H."/>
            <person name="Kawagashira N."/>
            <person name="Kawashima T."/>
            <person name="Kojima M."/>
            <person name="Kondo S."/>
            <person name="Konno H."/>
            <person name="Nakano K."/>
            <person name="Ninomiya N."/>
            <person name="Nishio T."/>
            <person name="Okada M."/>
            <person name="Plessy C."/>
            <person name="Shibata K."/>
            <person name="Shiraki T."/>
            <person name="Suzuki S."/>
            <person name="Tagami M."/>
            <person name="Waki K."/>
            <person name="Watahiki A."/>
            <person name="Okamura-Oho Y."/>
            <person name="Suzuki H."/>
            <person name="Kawai J."/>
            <person name="Hayashizaki Y."/>
        </authorList>
    </citation>
    <scope>NUCLEOTIDE SEQUENCE [LARGE SCALE MRNA] (ISOFORMS 1; 2; 3 AND 4)</scope>
    <source>
        <strain>C57BL/6J</strain>
        <tissue>Testis</tissue>
    </source>
</reference>
<reference key="3">
    <citation type="journal article" date="2009" name="PLoS Biol.">
        <title>Lineage-specific biology revealed by a finished genome assembly of the mouse.</title>
        <authorList>
            <person name="Church D.M."/>
            <person name="Goodstadt L."/>
            <person name="Hillier L.W."/>
            <person name="Zody M.C."/>
            <person name="Goldstein S."/>
            <person name="She X."/>
            <person name="Bult C.J."/>
            <person name="Agarwala R."/>
            <person name="Cherry J.L."/>
            <person name="DiCuccio M."/>
            <person name="Hlavina W."/>
            <person name="Kapustin Y."/>
            <person name="Meric P."/>
            <person name="Maglott D."/>
            <person name="Birtle Z."/>
            <person name="Marques A.C."/>
            <person name="Graves T."/>
            <person name="Zhou S."/>
            <person name="Teague B."/>
            <person name="Potamousis K."/>
            <person name="Churas C."/>
            <person name="Place M."/>
            <person name="Herschleb J."/>
            <person name="Runnheim R."/>
            <person name="Forrest D."/>
            <person name="Amos-Landgraf J."/>
            <person name="Schwartz D.C."/>
            <person name="Cheng Z."/>
            <person name="Lindblad-Toh K."/>
            <person name="Eichler E.E."/>
            <person name="Ponting C.P."/>
        </authorList>
    </citation>
    <scope>NUCLEOTIDE SEQUENCE [LARGE SCALE GENOMIC DNA] (ISOFORMS 2 AND 3)</scope>
    <source>
        <strain>C57BL/6J</strain>
    </source>
</reference>
<reference key="4">
    <citation type="journal article" date="2004" name="Mol. Biol. Cell">
        <title>Over-expression of Rififylin, a new RING finger and FYVE-like domain-containing protein, inhibits recycling from the endocytic recycling compartment.</title>
        <authorList>
            <person name="Coumailleau F."/>
            <person name="Das V."/>
            <person name="Alcover A."/>
            <person name="Raposo G."/>
            <person name="Vandormael-Pournin S."/>
            <person name="Le Bras S."/>
            <person name="Baldacci P."/>
            <person name="Dautry-Varsat A."/>
            <person name="Babinet C."/>
            <person name="Cohen-Tannoudji M."/>
        </authorList>
    </citation>
    <scope>FUNCTION IN ENDOCYTIC RECYCLING</scope>
    <scope>SUBCELLULAR LOCATION</scope>
    <scope>DOMAIN</scope>
    <scope>TISSUE SPECIFICITY</scope>
</reference>
<reference key="5">
    <citation type="journal article" date="2007" name="Proc. Natl. Acad. Sci. U.S.A.">
        <title>Large-scale phosphorylation analysis of mouse liver.</title>
        <authorList>
            <person name="Villen J."/>
            <person name="Beausoleil S.A."/>
            <person name="Gerber S.A."/>
            <person name="Gygi S.P."/>
        </authorList>
    </citation>
    <scope>IDENTIFICATION BY MASS SPECTROMETRY [LARGE SCALE ANALYSIS]</scope>
    <source>
        <tissue>Liver</tissue>
    </source>
</reference>
<reference key="6">
    <citation type="journal article" date="2009" name="Curr. Biol.">
        <title>CARP2 deficiency does not alter induction of NF-kappaB by TNFalpha.</title>
        <authorList>
            <person name="Ahmed A.U."/>
            <person name="Moulin M."/>
            <person name="Coumailleau F."/>
            <person name="Wong W.W."/>
            <person name="Miasari M."/>
            <person name="Carter H."/>
            <person name="Silke J."/>
            <person name="Cohen-Tannoudji M."/>
            <person name="Vince J.E."/>
            <person name="Vaux D.L."/>
        </authorList>
    </citation>
    <scope>DISRUPTION PHENOTYPE</scope>
</reference>
<reference key="7">
    <citation type="journal article" date="2010" name="Cell">
        <title>A tissue-specific atlas of mouse protein phosphorylation and expression.</title>
        <authorList>
            <person name="Huttlin E.L."/>
            <person name="Jedrychowski M.P."/>
            <person name="Elias J.E."/>
            <person name="Goswami T."/>
            <person name="Rad R."/>
            <person name="Beausoleil S.A."/>
            <person name="Villen J."/>
            <person name="Haas W."/>
            <person name="Sowa M.E."/>
            <person name="Gygi S.P."/>
        </authorList>
    </citation>
    <scope>PHOSPHORYLATION [LARGE SCALE ANALYSIS] AT SER-240; SER-243; SER-246 AND SER-254</scope>
    <scope>IDENTIFICATION BY MASS SPECTROMETRY [LARGE SCALE ANALYSIS]</scope>
    <source>
        <tissue>Brown adipose tissue</tissue>
        <tissue>Heart</tissue>
        <tissue>Kidney</tissue>
        <tissue>Liver</tissue>
        <tissue>Lung</tissue>
        <tissue>Pancreas</tissue>
        <tissue>Spleen</tissue>
        <tissue>Testis</tissue>
    </source>
</reference>
<reference key="8">
    <citation type="journal article" date="2012" name="Nat. Cell Biol.">
        <title>PRR5L degradation promotes mTORC2-mediated PKC-delta phosphorylation and cell migration downstream of Galpha12.</title>
        <authorList>
            <person name="Gan X."/>
            <person name="Wang J."/>
            <person name="Wang C."/>
            <person name="Sommer E."/>
            <person name="Kozasa T."/>
            <person name="Srinivasula S."/>
            <person name="Alessi D."/>
            <person name="Offermanns S."/>
            <person name="Simon M.I."/>
            <person name="Wu D."/>
        </authorList>
    </citation>
    <scope>FUNCTION IN CELL MIGRATION</scope>
    <scope>INDUCTION BY LPA</scope>
</reference>
<keyword id="KW-0025">Alternative splicing</keyword>
<keyword id="KW-0053">Apoptosis</keyword>
<keyword id="KW-1003">Cell membrane</keyword>
<keyword id="KW-0963">Cytoplasm</keyword>
<keyword id="KW-0967">Endosome</keyword>
<keyword id="KW-0449">Lipoprotein</keyword>
<keyword id="KW-0472">Membrane</keyword>
<keyword id="KW-0479">Metal-binding</keyword>
<keyword id="KW-0564">Palmitate</keyword>
<keyword id="KW-0597">Phosphoprotein</keyword>
<keyword id="KW-1185">Reference proteome</keyword>
<keyword id="KW-0677">Repeat</keyword>
<keyword id="KW-0808">Transferase</keyword>
<keyword id="KW-0832">Ubl conjugation</keyword>
<keyword id="KW-0833">Ubl conjugation pathway</keyword>
<keyword id="KW-0862">Zinc</keyword>
<keyword id="KW-0863">Zinc-finger</keyword>
<protein>
    <recommendedName>
        <fullName evidence="10">E3 ubiquitin-protein ligase rififylin</fullName>
        <ecNumber evidence="2">2.3.2.27</ecNumber>
    </recommendedName>
    <alternativeName>
        <fullName>RING finger and FYVE-like domain-containing protein 1</fullName>
        <shortName evidence="12">Fring</shortName>
    </alternativeName>
    <alternativeName>
        <fullName evidence="10">RING-type E3 ubiquitin transferase rififylin</fullName>
    </alternativeName>
</protein>